<reference key="1">
    <citation type="journal article" date="2006" name="Proc. Natl. Acad. Sci. U.S.A.">
        <title>Multireplicon genome architecture of Lactobacillus salivarius.</title>
        <authorList>
            <person name="Claesson M.J."/>
            <person name="Li Y."/>
            <person name="Leahy S."/>
            <person name="Canchaya C."/>
            <person name="van Pijkeren J.P."/>
            <person name="Cerdeno-Tarraga A.M."/>
            <person name="Parkhill J."/>
            <person name="Flynn S."/>
            <person name="O'Sullivan G.C."/>
            <person name="Collins J.K."/>
            <person name="Higgins D."/>
            <person name="Shanahan F."/>
            <person name="Fitzgerald G.F."/>
            <person name="van Sinderen D."/>
            <person name="O'Toole P.W."/>
        </authorList>
    </citation>
    <scope>NUCLEOTIDE SEQUENCE [LARGE SCALE GENOMIC DNA]</scope>
    <source>
        <strain>UCC118</strain>
    </source>
</reference>
<protein>
    <recommendedName>
        <fullName evidence="1">Pantothenate kinase</fullName>
        <ecNumber evidence="1">2.7.1.33</ecNumber>
    </recommendedName>
    <alternativeName>
        <fullName evidence="1">Pantothenic acid kinase</fullName>
    </alternativeName>
</protein>
<keyword id="KW-0067">ATP-binding</keyword>
<keyword id="KW-0173">Coenzyme A biosynthesis</keyword>
<keyword id="KW-0963">Cytoplasm</keyword>
<keyword id="KW-0418">Kinase</keyword>
<keyword id="KW-0547">Nucleotide-binding</keyword>
<keyword id="KW-1185">Reference proteome</keyword>
<keyword id="KW-0808">Transferase</keyword>
<proteinExistence type="inferred from homology"/>
<evidence type="ECO:0000255" key="1">
    <source>
        <dbReference type="HAMAP-Rule" id="MF_00215"/>
    </source>
</evidence>
<feature type="chain" id="PRO_1000043222" description="Pantothenate kinase">
    <location>
        <begin position="1"/>
        <end position="306"/>
    </location>
</feature>
<feature type="binding site" evidence="1">
    <location>
        <begin position="90"/>
        <end position="97"/>
    </location>
    <ligand>
        <name>ATP</name>
        <dbReference type="ChEBI" id="CHEBI:30616"/>
    </ligand>
</feature>
<name>COAA_LIGS1</name>
<comment type="catalytic activity">
    <reaction evidence="1">
        <text>(R)-pantothenate + ATP = (R)-4'-phosphopantothenate + ADP + H(+)</text>
        <dbReference type="Rhea" id="RHEA:16373"/>
        <dbReference type="ChEBI" id="CHEBI:10986"/>
        <dbReference type="ChEBI" id="CHEBI:15378"/>
        <dbReference type="ChEBI" id="CHEBI:29032"/>
        <dbReference type="ChEBI" id="CHEBI:30616"/>
        <dbReference type="ChEBI" id="CHEBI:456216"/>
        <dbReference type="EC" id="2.7.1.33"/>
    </reaction>
</comment>
<comment type="pathway">
    <text evidence="1">Cofactor biosynthesis; coenzyme A biosynthesis; CoA from (R)-pantothenate: step 1/5.</text>
</comment>
<comment type="subcellular location">
    <subcellularLocation>
        <location evidence="1">Cytoplasm</location>
    </subcellularLocation>
</comment>
<comment type="similarity">
    <text evidence="1">Belongs to the prokaryotic pantothenate kinase family.</text>
</comment>
<accession>Q1WRY7</accession>
<gene>
    <name evidence="1" type="primary">coaA</name>
    <name type="ordered locus">LSL_1538</name>
</gene>
<sequence>MENRLNYYKIERDEWSNFYQEHIVPLTEEELLNLKSLNDQISLKDVQDIYMPLVHLLRIHLDSHQELQDSQSEFLGVKAQKVPFILGIAGSVAVGKSTTARLLQSLLSEVYPDKKVQLITTDGFLYPNQELKRRNLMERKGFPESYDMRRLLRFVNDVKNNLPAKAPVYSHKVYDIVKGQYEIVESPDILIVEGINVLQLPTNQQIYVSDFFDFSIYVDAEESLIEEWYLERFETLLDTAFKDPTNYYYPYAIGDRKQAIKMAKNIWKTINLKNLREFILPTRNRADLIMHKTNNHVVNELFLRKY</sequence>
<dbReference type="EC" id="2.7.1.33" evidence="1"/>
<dbReference type="EMBL" id="CP000233">
    <property type="protein sequence ID" value="ABE00342.1"/>
    <property type="molecule type" value="Genomic_DNA"/>
</dbReference>
<dbReference type="RefSeq" id="WP_011476408.1">
    <property type="nucleotide sequence ID" value="NC_007929.1"/>
</dbReference>
<dbReference type="RefSeq" id="YP_536425.1">
    <property type="nucleotide sequence ID" value="NC_007929.1"/>
</dbReference>
<dbReference type="SMR" id="Q1WRY7"/>
<dbReference type="STRING" id="362948.LSL_1538"/>
<dbReference type="KEGG" id="lsl:LSL_1538"/>
<dbReference type="PATRIC" id="fig|362948.14.peg.1629"/>
<dbReference type="HOGENOM" id="CLU_053818_1_1_9"/>
<dbReference type="OrthoDB" id="1550976at2"/>
<dbReference type="UniPathway" id="UPA00241">
    <property type="reaction ID" value="UER00352"/>
</dbReference>
<dbReference type="Proteomes" id="UP000006559">
    <property type="component" value="Chromosome"/>
</dbReference>
<dbReference type="GO" id="GO:0005737">
    <property type="term" value="C:cytoplasm"/>
    <property type="evidence" value="ECO:0007669"/>
    <property type="project" value="UniProtKB-SubCell"/>
</dbReference>
<dbReference type="GO" id="GO:0005524">
    <property type="term" value="F:ATP binding"/>
    <property type="evidence" value="ECO:0007669"/>
    <property type="project" value="UniProtKB-UniRule"/>
</dbReference>
<dbReference type="GO" id="GO:0004594">
    <property type="term" value="F:pantothenate kinase activity"/>
    <property type="evidence" value="ECO:0007669"/>
    <property type="project" value="UniProtKB-UniRule"/>
</dbReference>
<dbReference type="GO" id="GO:0015937">
    <property type="term" value="P:coenzyme A biosynthetic process"/>
    <property type="evidence" value="ECO:0007669"/>
    <property type="project" value="UniProtKB-UniRule"/>
</dbReference>
<dbReference type="CDD" id="cd02025">
    <property type="entry name" value="PanK"/>
    <property type="match status" value="1"/>
</dbReference>
<dbReference type="Gene3D" id="3.40.50.300">
    <property type="entry name" value="P-loop containing nucleotide triphosphate hydrolases"/>
    <property type="match status" value="1"/>
</dbReference>
<dbReference type="HAMAP" id="MF_00215">
    <property type="entry name" value="Pantothen_kinase_1"/>
    <property type="match status" value="1"/>
</dbReference>
<dbReference type="InterPro" id="IPR027417">
    <property type="entry name" value="P-loop_NTPase"/>
</dbReference>
<dbReference type="InterPro" id="IPR004566">
    <property type="entry name" value="PanK"/>
</dbReference>
<dbReference type="InterPro" id="IPR006083">
    <property type="entry name" value="PRK/URK"/>
</dbReference>
<dbReference type="NCBIfam" id="TIGR00554">
    <property type="entry name" value="panK_bact"/>
    <property type="match status" value="1"/>
</dbReference>
<dbReference type="PANTHER" id="PTHR10285">
    <property type="entry name" value="URIDINE KINASE"/>
    <property type="match status" value="1"/>
</dbReference>
<dbReference type="Pfam" id="PF00485">
    <property type="entry name" value="PRK"/>
    <property type="match status" value="1"/>
</dbReference>
<dbReference type="PIRSF" id="PIRSF000545">
    <property type="entry name" value="Pantothenate_kin"/>
    <property type="match status" value="1"/>
</dbReference>
<dbReference type="SUPFAM" id="SSF52540">
    <property type="entry name" value="P-loop containing nucleoside triphosphate hydrolases"/>
    <property type="match status" value="1"/>
</dbReference>
<organism>
    <name type="scientific">Ligilactobacillus salivarius (strain UCC118)</name>
    <name type="common">Lactobacillus salivarius</name>
    <dbReference type="NCBI Taxonomy" id="362948"/>
    <lineage>
        <taxon>Bacteria</taxon>
        <taxon>Bacillati</taxon>
        <taxon>Bacillota</taxon>
        <taxon>Bacilli</taxon>
        <taxon>Lactobacillales</taxon>
        <taxon>Lactobacillaceae</taxon>
        <taxon>Ligilactobacillus</taxon>
    </lineage>
</organism>